<comment type="function">
    <text evidence="1">Catalyzes the stereoinversion of LL-2,6-diaminopimelate (L,L-DAP) to meso-diaminopimelate (meso-DAP), a precursor of L-lysine and an essential component of the bacterial peptidoglycan.</text>
</comment>
<comment type="catalytic activity">
    <reaction evidence="1">
        <text>(2S,6S)-2,6-diaminopimelate = meso-2,6-diaminopimelate</text>
        <dbReference type="Rhea" id="RHEA:15393"/>
        <dbReference type="ChEBI" id="CHEBI:57609"/>
        <dbReference type="ChEBI" id="CHEBI:57791"/>
        <dbReference type="EC" id="5.1.1.7"/>
    </reaction>
</comment>
<comment type="pathway">
    <text evidence="1">Amino-acid biosynthesis; L-lysine biosynthesis via DAP pathway; DL-2,6-diaminopimelate from LL-2,6-diaminopimelate: step 1/1.</text>
</comment>
<comment type="subunit">
    <text evidence="1">Homodimer.</text>
</comment>
<comment type="subcellular location">
    <subcellularLocation>
        <location evidence="1">Cytoplasm</location>
    </subcellularLocation>
</comment>
<comment type="similarity">
    <text evidence="1">Belongs to the diaminopimelate epimerase family.</text>
</comment>
<protein>
    <recommendedName>
        <fullName evidence="1">Diaminopimelate epimerase</fullName>
        <shortName evidence="1">DAP epimerase</shortName>
        <ecNumber evidence="1">5.1.1.7</ecNumber>
    </recommendedName>
    <alternativeName>
        <fullName evidence="1">PLP-independent amino acid racemase</fullName>
    </alternativeName>
</protein>
<reference key="1">
    <citation type="journal article" date="2011" name="J. Bacteriol.">
        <title>Complete genome sequence of the plant growth-promoting endophyte Burkholderia phytofirmans strain PsJN.</title>
        <authorList>
            <person name="Weilharter A."/>
            <person name="Mitter B."/>
            <person name="Shin M.V."/>
            <person name="Chain P.S."/>
            <person name="Nowak J."/>
            <person name="Sessitsch A."/>
        </authorList>
    </citation>
    <scope>NUCLEOTIDE SEQUENCE [LARGE SCALE GENOMIC DNA]</scope>
    <source>
        <strain>DSM 17436 / LMG 22146 / PsJN</strain>
    </source>
</reference>
<gene>
    <name evidence="1" type="primary">dapF</name>
    <name type="ordered locus">Bphyt_0349</name>
</gene>
<dbReference type="EC" id="5.1.1.7" evidence="1"/>
<dbReference type="EMBL" id="CP001052">
    <property type="protein sequence ID" value="ACD14774.1"/>
    <property type="molecule type" value="Genomic_DNA"/>
</dbReference>
<dbReference type="RefSeq" id="WP_012431417.1">
    <property type="nucleotide sequence ID" value="NC_010681.1"/>
</dbReference>
<dbReference type="SMR" id="B2T1P5"/>
<dbReference type="STRING" id="398527.Bphyt_0349"/>
<dbReference type="KEGG" id="bpy:Bphyt_0349"/>
<dbReference type="eggNOG" id="COG0253">
    <property type="taxonomic scope" value="Bacteria"/>
</dbReference>
<dbReference type="HOGENOM" id="CLU_053306_1_1_4"/>
<dbReference type="OrthoDB" id="9805408at2"/>
<dbReference type="UniPathway" id="UPA00034">
    <property type="reaction ID" value="UER00025"/>
</dbReference>
<dbReference type="Proteomes" id="UP000001739">
    <property type="component" value="Chromosome 1"/>
</dbReference>
<dbReference type="GO" id="GO:0005829">
    <property type="term" value="C:cytosol"/>
    <property type="evidence" value="ECO:0007669"/>
    <property type="project" value="TreeGrafter"/>
</dbReference>
<dbReference type="GO" id="GO:0008837">
    <property type="term" value="F:diaminopimelate epimerase activity"/>
    <property type="evidence" value="ECO:0007669"/>
    <property type="project" value="UniProtKB-UniRule"/>
</dbReference>
<dbReference type="GO" id="GO:0009089">
    <property type="term" value="P:lysine biosynthetic process via diaminopimelate"/>
    <property type="evidence" value="ECO:0007669"/>
    <property type="project" value="UniProtKB-UniRule"/>
</dbReference>
<dbReference type="FunFam" id="3.10.310.10:FF:000001">
    <property type="entry name" value="Diaminopimelate epimerase"/>
    <property type="match status" value="1"/>
</dbReference>
<dbReference type="Gene3D" id="3.10.310.10">
    <property type="entry name" value="Diaminopimelate Epimerase, Chain A, domain 1"/>
    <property type="match status" value="2"/>
</dbReference>
<dbReference type="HAMAP" id="MF_00197">
    <property type="entry name" value="DAP_epimerase"/>
    <property type="match status" value="1"/>
</dbReference>
<dbReference type="InterPro" id="IPR018510">
    <property type="entry name" value="DAP_epimerase_AS"/>
</dbReference>
<dbReference type="InterPro" id="IPR001653">
    <property type="entry name" value="DAP_epimerase_DapF"/>
</dbReference>
<dbReference type="NCBIfam" id="TIGR00652">
    <property type="entry name" value="DapF"/>
    <property type="match status" value="1"/>
</dbReference>
<dbReference type="PANTHER" id="PTHR31689:SF0">
    <property type="entry name" value="DIAMINOPIMELATE EPIMERASE"/>
    <property type="match status" value="1"/>
</dbReference>
<dbReference type="PANTHER" id="PTHR31689">
    <property type="entry name" value="DIAMINOPIMELATE EPIMERASE, CHLOROPLASTIC"/>
    <property type="match status" value="1"/>
</dbReference>
<dbReference type="Pfam" id="PF01678">
    <property type="entry name" value="DAP_epimerase"/>
    <property type="match status" value="2"/>
</dbReference>
<dbReference type="SUPFAM" id="SSF54506">
    <property type="entry name" value="Diaminopimelate epimerase-like"/>
    <property type="match status" value="1"/>
</dbReference>
<dbReference type="PROSITE" id="PS01326">
    <property type="entry name" value="DAP_EPIMERASE"/>
    <property type="match status" value="1"/>
</dbReference>
<evidence type="ECO:0000255" key="1">
    <source>
        <dbReference type="HAMAP-Rule" id="MF_00197"/>
    </source>
</evidence>
<sequence length="299" mass="32046">MKLKFTKMHGAGNDFVVLDGYTQPVNLTPAQVRALADRHFGVGADQLLLVEKPTVAGVDFRYRIFNCDGGEVEHCGNGARCFVKFVRDSGLTDQRSVRVQVQKGTITLTMQENGEVLVDMGTPVFDPERVPFATKGLQGRGEGADTLWPLDVNGTTRWISVVSMGNPHAVQVVDDVEAFPVLVEGPVIERHARFPQRVNAGFMQIVGRSEIKLRVYERGAGETLACGTGACAAVAAGIRRGLLDAPVLVHTHGGKLTITWDAAQADQPLLMAGPAATVFEGEIELPDSLADSLANSQAA</sequence>
<organism>
    <name type="scientific">Paraburkholderia phytofirmans (strain DSM 17436 / LMG 22146 / PsJN)</name>
    <name type="common">Burkholderia phytofirmans</name>
    <dbReference type="NCBI Taxonomy" id="398527"/>
    <lineage>
        <taxon>Bacteria</taxon>
        <taxon>Pseudomonadati</taxon>
        <taxon>Pseudomonadota</taxon>
        <taxon>Betaproteobacteria</taxon>
        <taxon>Burkholderiales</taxon>
        <taxon>Burkholderiaceae</taxon>
        <taxon>Paraburkholderia</taxon>
    </lineage>
</organism>
<feature type="chain" id="PRO_1000099223" description="Diaminopimelate epimerase">
    <location>
        <begin position="1"/>
        <end position="299"/>
    </location>
</feature>
<feature type="active site" description="Proton donor" evidence="1">
    <location>
        <position position="75"/>
    </location>
</feature>
<feature type="active site" description="Proton acceptor" evidence="1">
    <location>
        <position position="226"/>
    </location>
</feature>
<feature type="binding site" evidence="1">
    <location>
        <position position="13"/>
    </location>
    <ligand>
        <name>substrate</name>
    </ligand>
</feature>
<feature type="binding site" evidence="1">
    <location>
        <position position="46"/>
    </location>
    <ligand>
        <name>substrate</name>
    </ligand>
</feature>
<feature type="binding site" evidence="1">
    <location>
        <position position="66"/>
    </location>
    <ligand>
        <name>substrate</name>
    </ligand>
</feature>
<feature type="binding site" evidence="1">
    <location>
        <begin position="76"/>
        <end position="77"/>
    </location>
    <ligand>
        <name>substrate</name>
    </ligand>
</feature>
<feature type="binding site" evidence="1">
    <location>
        <position position="166"/>
    </location>
    <ligand>
        <name>substrate</name>
    </ligand>
</feature>
<feature type="binding site" evidence="1">
    <location>
        <position position="199"/>
    </location>
    <ligand>
        <name>substrate</name>
    </ligand>
</feature>
<feature type="binding site" evidence="1">
    <location>
        <begin position="217"/>
        <end position="218"/>
    </location>
    <ligand>
        <name>substrate</name>
    </ligand>
</feature>
<feature type="binding site" evidence="1">
    <location>
        <begin position="227"/>
        <end position="228"/>
    </location>
    <ligand>
        <name>substrate</name>
    </ligand>
</feature>
<feature type="site" description="Could be important to modulate the pK values of the two catalytic cysteine residues" evidence="1">
    <location>
        <position position="168"/>
    </location>
</feature>
<feature type="site" description="Could be important to modulate the pK values of the two catalytic cysteine residues" evidence="1">
    <location>
        <position position="217"/>
    </location>
</feature>
<accession>B2T1P5</accession>
<keyword id="KW-0028">Amino-acid biosynthesis</keyword>
<keyword id="KW-0963">Cytoplasm</keyword>
<keyword id="KW-0413">Isomerase</keyword>
<keyword id="KW-0457">Lysine biosynthesis</keyword>
<name>DAPF_PARPJ</name>
<proteinExistence type="inferred from homology"/>